<gene>
    <name evidence="6" type="primary">A310L</name>
</gene>
<keyword id="KW-0002">3D-structure</keyword>
<keyword id="KW-0167">Capsid protein</keyword>
<keyword id="KW-0325">Glycoprotein</keyword>
<keyword id="KW-0426">Late protein</keyword>
<keyword id="KW-1185">Reference proteome</keyword>
<keyword id="KW-0946">Virion</keyword>
<feature type="chain" id="PRO_0000460567" description="Penton capsid protein P1">
    <location>
        <begin position="1"/>
        <end position="170"/>
    </location>
</feature>
<feature type="region of interest" description="Disordered" evidence="1">
    <location>
        <begin position="1"/>
        <end position="25"/>
    </location>
</feature>
<feature type="glycosylation site" description="N-linked (Glc...) asparagine; by host" evidence="5">
    <location>
        <position position="21"/>
    </location>
</feature>
<feature type="glycosylation site" description="N-linked (Glc...) asparagine; by host" evidence="5">
    <location>
        <position position="93"/>
    </location>
</feature>
<feature type="glycosylation site" description="N-linked (Glc...) asparagine; by host" evidence="5">
    <location>
        <position position="129"/>
    </location>
</feature>
<feature type="glycosylation site" description="N-linked (Glc...) asparagine; by host" evidence="5">
    <location>
        <position position="137"/>
    </location>
</feature>
<protein>
    <recommendedName>
        <fullName>Penton capsid protein P1</fullName>
    </recommendedName>
</protein>
<evidence type="ECO:0000256" key="1">
    <source>
        <dbReference type="SAM" id="MobiDB-lite"/>
    </source>
</evidence>
<evidence type="ECO:0000269" key="2">
    <source>
    </source>
</evidence>
<evidence type="ECO:0000269" key="3">
    <source>
    </source>
</evidence>
<evidence type="ECO:0000269" key="4">
    <source>
    </source>
</evidence>
<evidence type="ECO:0000305" key="5">
    <source>
    </source>
</evidence>
<evidence type="ECO:0000312" key="6">
    <source>
        <dbReference type="EMBL" id="AAC96678.1"/>
    </source>
</evidence>
<evidence type="ECO:0000312" key="7">
    <source>
        <dbReference type="Proteomes" id="UP000000862"/>
    </source>
</evidence>
<evidence type="ECO:0007744" key="8">
    <source>
        <dbReference type="PDB" id="6NCL"/>
    </source>
</evidence>
<comment type="function">
    <text evidence="3 4">Constitutes the 12 pentameric capsomers positioned at the 5-fold vertices of the outer capsid shell (PubMed:30674888, PubMed:36309542). One of the vertex is composed of a variant of P1 (type II pentameric capsomer) and has thereby a structure slightly different from the other verteces (type I pentameric capsomers) (PubMed:36309542).</text>
</comment>
<comment type="subcellular location">
    <subcellularLocation>
        <location evidence="3">Virion</location>
    </subcellularLocation>
</comment>
<comment type="induction">
    <text evidence="2">Expressed in the late phase of the viral replicative cycle.</text>
</comment>
<comment type="PTM">
    <text evidence="3">Glycosylated (PubMed:30674888). The pattern of glycosylation sites are unusual (PubMed:30674888).</text>
</comment>
<reference key="1">
    <citation type="journal article" date="1996" name="Virology">
        <title>Analysis of 76 kb of the chlorella virus PBCV-1 330-kb genome: map positions 182 to 258.</title>
        <authorList>
            <person name="Kutish G.F."/>
            <person name="Li Y."/>
            <person name="Lu Z."/>
            <person name="Furuta M."/>
            <person name="Rock D.L."/>
            <person name="van Etten J.L."/>
        </authorList>
    </citation>
    <scope>NUCLEOTIDE SEQUENCE [LARGE SCALE GENOMIC DNA]</scope>
</reference>
<reference key="2">
    <citation type="journal article" date="2010" name="J. Virol.">
        <title>Microarray analysis of Paramecium bursaria chlorella virus 1 transcription.</title>
        <authorList>
            <person name="Yanai-Balser G.M."/>
            <person name="Duncan G.A."/>
            <person name="Eudy J.D."/>
            <person name="Wang D."/>
            <person name="Li X."/>
            <person name="Agarkova I.V."/>
            <person name="Dunigan D.D."/>
            <person name="Van Etten J.L."/>
        </authorList>
    </citation>
    <scope>INDUCTION</scope>
</reference>
<reference key="3">
    <citation type="journal article" date="2022" name="Nat. Commun.">
        <title>Near-atomic, non-icosahedrally averaged structure of giant virus Paramecium bursaria chlorella virus 1.</title>
        <authorList>
            <person name="Shao Q."/>
            <person name="Agarkova I.V."/>
            <person name="Noel E.A."/>
            <person name="Dunigan D.D."/>
            <person name="Liu Y."/>
            <person name="Wang A."/>
            <person name="Guo M."/>
            <person name="Xie L."/>
            <person name="Zhao X."/>
            <person name="Rossmann M.G."/>
            <person name="Van Etten J.L."/>
            <person name="Klose T."/>
            <person name="Fang Q."/>
        </authorList>
    </citation>
    <scope>FUNCTION</scope>
</reference>
<reference evidence="8" key="4">
    <citation type="journal article" date="2019" name="Nat. Commun.">
        <title>Near-atomic structure of a giant virus.</title>
        <authorList>
            <person name="Fang Q."/>
            <person name="Zhu D."/>
            <person name="Agarkova I."/>
            <person name="Adhikari J."/>
            <person name="Klose T."/>
            <person name="Liu Y."/>
            <person name="Chen Z."/>
            <person name="Sun Y."/>
            <person name="Gross M.L."/>
            <person name="Van Etten J.L."/>
            <person name="Zhang X."/>
            <person name="Rossmann M.G."/>
        </authorList>
    </citation>
    <scope>STRUCTURE BY ELECTRON MICROSCOPY (3.50 ANGSTROMS)</scope>
    <scope>SUBCELLULAR LOCATION</scope>
    <scope>FUNCTION</scope>
    <scope>GLYCOSYLATION AT ASN-21; ASN-93; ASN-129 AND ASN-137</scope>
</reference>
<proteinExistence type="evidence at protein level"/>
<organism evidence="6 7">
    <name type="scientific">Paramecium bursaria Chlorella virus 1</name>
    <name type="common">PBCV-1</name>
    <dbReference type="NCBI Taxonomy" id="10506"/>
    <lineage>
        <taxon>Viruses</taxon>
        <taxon>Varidnaviria</taxon>
        <taxon>Bamfordvirae</taxon>
        <taxon>Nucleocytoviricota</taxon>
        <taxon>Megaviricetes</taxon>
        <taxon>Algavirales</taxon>
        <taxon>Phycodnaviridae</taxon>
        <taxon>Chlorovirus</taxon>
    </lineage>
</organism>
<name>PENTA_PBCV1</name>
<organismHost>
    <name type="scientific">Chlorella</name>
    <dbReference type="NCBI Taxonomy" id="3071"/>
</organismHost>
<dbReference type="EMBL" id="JF411744">
    <property type="protein sequence ID" value="AAC96678.1"/>
    <property type="molecule type" value="Genomic_DNA"/>
</dbReference>
<dbReference type="PIR" id="T17808">
    <property type="entry name" value="T17808"/>
</dbReference>
<dbReference type="RefSeq" id="NP_048665.1">
    <property type="nucleotide sequence ID" value="NC_000852.5"/>
</dbReference>
<dbReference type="PDB" id="6NCL">
    <property type="method" value="EM"/>
    <property type="resolution" value="3.50 A"/>
    <property type="chains" value="a6=1-170"/>
</dbReference>
<dbReference type="PDB" id="8RBS">
    <property type="method" value="EM"/>
    <property type="resolution" value="18.00 A"/>
    <property type="chains" value="K=2-168"/>
</dbReference>
<dbReference type="PDB" id="8RBT">
    <property type="method" value="EM"/>
    <property type="resolution" value="12.00 A"/>
    <property type="chains" value="S=2-168"/>
</dbReference>
<dbReference type="PDBsum" id="6NCL"/>
<dbReference type="PDBsum" id="8RBS"/>
<dbReference type="PDBsum" id="8RBT"/>
<dbReference type="EMDB" id="EMD-0436"/>
<dbReference type="SMR" id="Q84626"/>
<dbReference type="GeneID" id="918290"/>
<dbReference type="KEGG" id="vg:918290"/>
<dbReference type="OrthoDB" id="11320at10239"/>
<dbReference type="Proteomes" id="UP000000862">
    <property type="component" value="Genome"/>
</dbReference>
<dbReference type="GO" id="GO:0019028">
    <property type="term" value="C:viral capsid"/>
    <property type="evidence" value="ECO:0007669"/>
    <property type="project" value="UniProtKB-KW"/>
</dbReference>
<accession>Q84626</accession>
<sequence length="170" mass="18268">MVETTQHFVSIESSNRPDPANTTPANYSIQLPQRYRNIWSAMLVNIALPAVSPPQKYVYLDIDKLNSIDSTSPSGGVNFALAKIPLSIAGTGNVFFADTMTSSFPNVPLQNPVATMDKLNIKLKDANGNVLTIPAGNEHSFMIQLTCGDYIPRGGGSTITQNGRVLGGTR</sequence>